<proteinExistence type="inferred from homology"/>
<feature type="chain" id="PRO_1000015250" description="S-adenosylmethionine:tRNA ribosyltransferase-isomerase">
    <location>
        <begin position="1"/>
        <end position="347"/>
    </location>
</feature>
<reference key="1">
    <citation type="submission" date="2007-04" db="EMBL/GenBank/DDBJ databases">
        <title>Complete sequence of Pseudomonas mendocina ymp.</title>
        <authorList>
            <consortium name="US DOE Joint Genome Institute"/>
            <person name="Copeland A."/>
            <person name="Lucas S."/>
            <person name="Lapidus A."/>
            <person name="Barry K."/>
            <person name="Glavina del Rio T."/>
            <person name="Dalin E."/>
            <person name="Tice H."/>
            <person name="Pitluck S."/>
            <person name="Kiss H."/>
            <person name="Brettin T."/>
            <person name="Detter J.C."/>
            <person name="Bruce D."/>
            <person name="Han C."/>
            <person name="Schmutz J."/>
            <person name="Larimer F."/>
            <person name="Land M."/>
            <person name="Hauser L."/>
            <person name="Kyrpides N."/>
            <person name="Mikhailova N."/>
            <person name="Hersman L."/>
            <person name="Dubois J."/>
            <person name="Maurice P."/>
            <person name="Richardson P."/>
        </authorList>
    </citation>
    <scope>NUCLEOTIDE SEQUENCE [LARGE SCALE GENOMIC DNA]</scope>
    <source>
        <strain>ymp</strain>
    </source>
</reference>
<sequence length="347" mass="38237">MRVADFHFDLPESLIARHPLAERRASRLLQLDGPSGALRHGQFTDLLEQLRPGDLMVFNNTRVIPARLFGQKASGGRLEVLVERVLDQHRVLAHVRSSKSPKPGSQILIEGGGEAEMVARHDALFELRFAEPVLPLLERVGHMPLPPYIDRPDDEADRERYQTVYAEKAGAVAAPTAGLHFDDELLAAIRAKGVETAFVTLHVGAGTFQPVRVERIEDHHMHSEWLEVSQEVVDAVAACRARGGRVVAVGTTSVRSLETAAQSSELKPFSGDTDIFIYPGRPFHVVDALVTNFHLPESTLLMLVSAFAGYAETMAAYRAAVEQGYRFFSYGDAMFITRNPAARGPEV</sequence>
<accession>A4XY53</accession>
<dbReference type="EC" id="2.4.99.17" evidence="1"/>
<dbReference type="EMBL" id="CP000680">
    <property type="protein sequence ID" value="ABP86269.1"/>
    <property type="molecule type" value="Genomic_DNA"/>
</dbReference>
<dbReference type="SMR" id="A4XY53"/>
<dbReference type="STRING" id="399739.Pmen_3521"/>
<dbReference type="KEGG" id="pmy:Pmen_3521"/>
<dbReference type="PATRIC" id="fig|399739.8.peg.3567"/>
<dbReference type="eggNOG" id="COG0809">
    <property type="taxonomic scope" value="Bacteria"/>
</dbReference>
<dbReference type="HOGENOM" id="CLU_039110_1_0_6"/>
<dbReference type="OrthoDB" id="9805933at2"/>
<dbReference type="UniPathway" id="UPA00392"/>
<dbReference type="GO" id="GO:0005737">
    <property type="term" value="C:cytoplasm"/>
    <property type="evidence" value="ECO:0007669"/>
    <property type="project" value="UniProtKB-SubCell"/>
</dbReference>
<dbReference type="GO" id="GO:0051075">
    <property type="term" value="F:S-adenosylmethionine:tRNA ribosyltransferase-isomerase activity"/>
    <property type="evidence" value="ECO:0007669"/>
    <property type="project" value="UniProtKB-EC"/>
</dbReference>
<dbReference type="GO" id="GO:0008616">
    <property type="term" value="P:queuosine biosynthetic process"/>
    <property type="evidence" value="ECO:0007669"/>
    <property type="project" value="UniProtKB-UniRule"/>
</dbReference>
<dbReference type="GO" id="GO:0002099">
    <property type="term" value="P:tRNA wobble guanine modification"/>
    <property type="evidence" value="ECO:0007669"/>
    <property type="project" value="TreeGrafter"/>
</dbReference>
<dbReference type="FunFam" id="2.40.10.240:FF:000001">
    <property type="entry name" value="S-adenosylmethionine:tRNA ribosyltransferase-isomerase"/>
    <property type="match status" value="1"/>
</dbReference>
<dbReference type="FunFam" id="3.40.1780.10:FF:000001">
    <property type="entry name" value="S-adenosylmethionine:tRNA ribosyltransferase-isomerase"/>
    <property type="match status" value="1"/>
</dbReference>
<dbReference type="Gene3D" id="2.40.10.240">
    <property type="entry name" value="QueA-like"/>
    <property type="match status" value="1"/>
</dbReference>
<dbReference type="Gene3D" id="3.40.1780.10">
    <property type="entry name" value="QueA-like"/>
    <property type="match status" value="1"/>
</dbReference>
<dbReference type="HAMAP" id="MF_00113">
    <property type="entry name" value="QueA"/>
    <property type="match status" value="1"/>
</dbReference>
<dbReference type="InterPro" id="IPR003699">
    <property type="entry name" value="QueA"/>
</dbReference>
<dbReference type="InterPro" id="IPR042118">
    <property type="entry name" value="QueA_dom1"/>
</dbReference>
<dbReference type="InterPro" id="IPR042119">
    <property type="entry name" value="QueA_dom2"/>
</dbReference>
<dbReference type="InterPro" id="IPR036100">
    <property type="entry name" value="QueA_sf"/>
</dbReference>
<dbReference type="NCBIfam" id="NF001140">
    <property type="entry name" value="PRK00147.1"/>
    <property type="match status" value="1"/>
</dbReference>
<dbReference type="NCBIfam" id="TIGR00113">
    <property type="entry name" value="queA"/>
    <property type="match status" value="1"/>
</dbReference>
<dbReference type="PANTHER" id="PTHR30307">
    <property type="entry name" value="S-ADENOSYLMETHIONINE:TRNA RIBOSYLTRANSFERASE-ISOMERASE"/>
    <property type="match status" value="1"/>
</dbReference>
<dbReference type="PANTHER" id="PTHR30307:SF0">
    <property type="entry name" value="S-ADENOSYLMETHIONINE:TRNA RIBOSYLTRANSFERASE-ISOMERASE"/>
    <property type="match status" value="1"/>
</dbReference>
<dbReference type="Pfam" id="PF02547">
    <property type="entry name" value="Queuosine_synth"/>
    <property type="match status" value="1"/>
</dbReference>
<dbReference type="SUPFAM" id="SSF111337">
    <property type="entry name" value="QueA-like"/>
    <property type="match status" value="1"/>
</dbReference>
<comment type="function">
    <text evidence="1">Transfers and isomerizes the ribose moiety from AdoMet to the 7-aminomethyl group of 7-deazaguanine (preQ1-tRNA) to give epoxyqueuosine (oQ-tRNA).</text>
</comment>
<comment type="catalytic activity">
    <reaction evidence="1">
        <text>7-aminomethyl-7-carbaguanosine(34) in tRNA + S-adenosyl-L-methionine = epoxyqueuosine(34) in tRNA + adenine + L-methionine + 2 H(+)</text>
        <dbReference type="Rhea" id="RHEA:32155"/>
        <dbReference type="Rhea" id="RHEA-COMP:10342"/>
        <dbReference type="Rhea" id="RHEA-COMP:18582"/>
        <dbReference type="ChEBI" id="CHEBI:15378"/>
        <dbReference type="ChEBI" id="CHEBI:16708"/>
        <dbReference type="ChEBI" id="CHEBI:57844"/>
        <dbReference type="ChEBI" id="CHEBI:59789"/>
        <dbReference type="ChEBI" id="CHEBI:82833"/>
        <dbReference type="ChEBI" id="CHEBI:194443"/>
        <dbReference type="EC" id="2.4.99.17"/>
    </reaction>
</comment>
<comment type="pathway">
    <text evidence="1">tRNA modification; tRNA-queuosine biosynthesis.</text>
</comment>
<comment type="subunit">
    <text evidence="1">Monomer.</text>
</comment>
<comment type="subcellular location">
    <subcellularLocation>
        <location evidence="1">Cytoplasm</location>
    </subcellularLocation>
</comment>
<comment type="similarity">
    <text evidence="1">Belongs to the QueA family.</text>
</comment>
<evidence type="ECO:0000255" key="1">
    <source>
        <dbReference type="HAMAP-Rule" id="MF_00113"/>
    </source>
</evidence>
<gene>
    <name evidence="1" type="primary">queA</name>
    <name type="ordered locus">Pmen_3521</name>
</gene>
<protein>
    <recommendedName>
        <fullName evidence="1">S-adenosylmethionine:tRNA ribosyltransferase-isomerase</fullName>
        <ecNumber evidence="1">2.4.99.17</ecNumber>
    </recommendedName>
    <alternativeName>
        <fullName evidence="1">Queuosine biosynthesis protein QueA</fullName>
    </alternativeName>
</protein>
<name>QUEA_ECTM1</name>
<keyword id="KW-0963">Cytoplasm</keyword>
<keyword id="KW-0671">Queuosine biosynthesis</keyword>
<keyword id="KW-0949">S-adenosyl-L-methionine</keyword>
<keyword id="KW-0808">Transferase</keyword>
<organism>
    <name type="scientific">Ectopseudomonas mendocina (strain ymp)</name>
    <name type="common">Pseudomonas mendocina</name>
    <dbReference type="NCBI Taxonomy" id="399739"/>
    <lineage>
        <taxon>Bacteria</taxon>
        <taxon>Pseudomonadati</taxon>
        <taxon>Pseudomonadota</taxon>
        <taxon>Gammaproteobacteria</taxon>
        <taxon>Pseudomonadales</taxon>
        <taxon>Pseudomonadaceae</taxon>
        <taxon>Ectopseudomonas</taxon>
    </lineage>
</organism>